<proteinExistence type="inferred from homology"/>
<reference key="1">
    <citation type="journal article" date="2005" name="J. Bacteriol.">
        <title>Insights into genome plasticity and pathogenicity of the plant pathogenic Bacterium Xanthomonas campestris pv. vesicatoria revealed by the complete genome sequence.</title>
        <authorList>
            <person name="Thieme F."/>
            <person name="Koebnik R."/>
            <person name="Bekel T."/>
            <person name="Berger C."/>
            <person name="Boch J."/>
            <person name="Buettner D."/>
            <person name="Caldana C."/>
            <person name="Gaigalat L."/>
            <person name="Goesmann A."/>
            <person name="Kay S."/>
            <person name="Kirchner O."/>
            <person name="Lanz C."/>
            <person name="Linke B."/>
            <person name="McHardy A.C."/>
            <person name="Meyer F."/>
            <person name="Mittenhuber G."/>
            <person name="Nies D.H."/>
            <person name="Niesbach-Kloesgen U."/>
            <person name="Patschkowski T."/>
            <person name="Rueckert C."/>
            <person name="Rupp O."/>
            <person name="Schneiker S."/>
            <person name="Schuster S.C."/>
            <person name="Vorhoelter F.J."/>
            <person name="Weber E."/>
            <person name="Puehler A."/>
            <person name="Bonas U."/>
            <person name="Bartels D."/>
            <person name="Kaiser O."/>
        </authorList>
    </citation>
    <scope>NUCLEOTIDE SEQUENCE [LARGE SCALE GENOMIC DNA]</scope>
    <source>
        <strain>85-10</strain>
    </source>
</reference>
<comment type="function">
    <text evidence="1">Necessary for normal cell division and for the maintenance of normal septation.</text>
</comment>
<comment type="cofactor">
    <cofactor evidence="1">
        <name>Mg(2+)</name>
        <dbReference type="ChEBI" id="CHEBI:18420"/>
    </cofactor>
</comment>
<comment type="similarity">
    <text evidence="1">Belongs to the TRAFAC class TrmE-Era-EngA-EngB-Septin-like GTPase superfamily. EngB GTPase family.</text>
</comment>
<comment type="sequence caution" evidence="2">
    <conflict type="erroneous initiation">
        <sequence resource="EMBL-CDS" id="CAJ22412"/>
    </conflict>
</comment>
<protein>
    <recommendedName>
        <fullName evidence="1">Probable GTP-binding protein EngB</fullName>
    </recommendedName>
</protein>
<accession>Q3BXK1</accession>
<keyword id="KW-0131">Cell cycle</keyword>
<keyword id="KW-0132">Cell division</keyword>
<keyword id="KW-0342">GTP-binding</keyword>
<keyword id="KW-0460">Magnesium</keyword>
<keyword id="KW-0479">Metal-binding</keyword>
<keyword id="KW-0547">Nucleotide-binding</keyword>
<keyword id="KW-0717">Septation</keyword>
<feature type="chain" id="PRO_0000269479" description="Probable GTP-binding protein EngB">
    <location>
        <begin position="1"/>
        <end position="207"/>
    </location>
</feature>
<feature type="domain" description="EngB-type G" evidence="1">
    <location>
        <begin position="24"/>
        <end position="199"/>
    </location>
</feature>
<feature type="binding site" evidence="1">
    <location>
        <begin position="32"/>
        <end position="39"/>
    </location>
    <ligand>
        <name>GTP</name>
        <dbReference type="ChEBI" id="CHEBI:37565"/>
    </ligand>
</feature>
<feature type="binding site" evidence="1">
    <location>
        <position position="39"/>
    </location>
    <ligand>
        <name>Mg(2+)</name>
        <dbReference type="ChEBI" id="CHEBI:18420"/>
    </ligand>
</feature>
<feature type="binding site" evidence="1">
    <location>
        <begin position="59"/>
        <end position="63"/>
    </location>
    <ligand>
        <name>GTP</name>
        <dbReference type="ChEBI" id="CHEBI:37565"/>
    </ligand>
</feature>
<feature type="binding site" evidence="1">
    <location>
        <position position="61"/>
    </location>
    <ligand>
        <name>Mg(2+)</name>
        <dbReference type="ChEBI" id="CHEBI:18420"/>
    </ligand>
</feature>
<feature type="binding site" evidence="1">
    <location>
        <begin position="77"/>
        <end position="80"/>
    </location>
    <ligand>
        <name>GTP</name>
        <dbReference type="ChEBI" id="CHEBI:37565"/>
    </ligand>
</feature>
<feature type="binding site" evidence="1">
    <location>
        <begin position="144"/>
        <end position="147"/>
    </location>
    <ligand>
        <name>GTP</name>
        <dbReference type="ChEBI" id="CHEBI:37565"/>
    </ligand>
</feature>
<feature type="binding site" evidence="1">
    <location>
        <begin position="178"/>
        <end position="180"/>
    </location>
    <ligand>
        <name>GTP</name>
        <dbReference type="ChEBI" id="CHEBI:37565"/>
    </ligand>
</feature>
<sequence>MSLLIEQARYHLSAHNARQLPDDGGYEVAFAGRSNAGKSSALNALTRQNALARVSKTPGRTQQLVFFQIQPERYLVDLPGYGYAKVPQDLQAHWQAFIDRYFRTREALRGLVVVMDIRHPLKDYDLQMLGYAAERGLPAHGLLTKADKLGRGQQMQTLQKVKKEVTSRFGDSVTVQTYSGESRQGVDELRAIVGAWLGLDVETTAAE</sequence>
<gene>
    <name evidence="1" type="primary">engB</name>
    <name type="ordered locus">XCV0781</name>
</gene>
<dbReference type="EMBL" id="AM039952">
    <property type="protein sequence ID" value="CAJ22412.1"/>
    <property type="status" value="ALT_INIT"/>
    <property type="molecule type" value="Genomic_DNA"/>
</dbReference>
<dbReference type="SMR" id="Q3BXK1"/>
<dbReference type="STRING" id="456327.BJD11_18905"/>
<dbReference type="KEGG" id="xcv:XCV0781"/>
<dbReference type="eggNOG" id="COG0218">
    <property type="taxonomic scope" value="Bacteria"/>
</dbReference>
<dbReference type="HOGENOM" id="CLU_033732_3_0_6"/>
<dbReference type="Proteomes" id="UP000007069">
    <property type="component" value="Chromosome"/>
</dbReference>
<dbReference type="GO" id="GO:0005829">
    <property type="term" value="C:cytosol"/>
    <property type="evidence" value="ECO:0007669"/>
    <property type="project" value="TreeGrafter"/>
</dbReference>
<dbReference type="GO" id="GO:0005525">
    <property type="term" value="F:GTP binding"/>
    <property type="evidence" value="ECO:0007669"/>
    <property type="project" value="UniProtKB-UniRule"/>
</dbReference>
<dbReference type="GO" id="GO:0046872">
    <property type="term" value="F:metal ion binding"/>
    <property type="evidence" value="ECO:0007669"/>
    <property type="project" value="UniProtKB-KW"/>
</dbReference>
<dbReference type="GO" id="GO:0000917">
    <property type="term" value="P:division septum assembly"/>
    <property type="evidence" value="ECO:0007669"/>
    <property type="project" value="UniProtKB-KW"/>
</dbReference>
<dbReference type="CDD" id="cd01876">
    <property type="entry name" value="YihA_EngB"/>
    <property type="match status" value="1"/>
</dbReference>
<dbReference type="FunFam" id="3.40.50.300:FF:000098">
    <property type="entry name" value="Probable GTP-binding protein EngB"/>
    <property type="match status" value="1"/>
</dbReference>
<dbReference type="Gene3D" id="3.40.50.300">
    <property type="entry name" value="P-loop containing nucleotide triphosphate hydrolases"/>
    <property type="match status" value="1"/>
</dbReference>
<dbReference type="HAMAP" id="MF_00321">
    <property type="entry name" value="GTPase_EngB"/>
    <property type="match status" value="1"/>
</dbReference>
<dbReference type="InterPro" id="IPR030393">
    <property type="entry name" value="G_ENGB_dom"/>
</dbReference>
<dbReference type="InterPro" id="IPR006073">
    <property type="entry name" value="GTP-bd"/>
</dbReference>
<dbReference type="InterPro" id="IPR019987">
    <property type="entry name" value="GTP-bd_ribosome_bio_YsxC"/>
</dbReference>
<dbReference type="InterPro" id="IPR027417">
    <property type="entry name" value="P-loop_NTPase"/>
</dbReference>
<dbReference type="NCBIfam" id="TIGR03598">
    <property type="entry name" value="GTPase_YsxC"/>
    <property type="match status" value="1"/>
</dbReference>
<dbReference type="PANTHER" id="PTHR11649:SF13">
    <property type="entry name" value="ENGB-TYPE G DOMAIN-CONTAINING PROTEIN"/>
    <property type="match status" value="1"/>
</dbReference>
<dbReference type="PANTHER" id="PTHR11649">
    <property type="entry name" value="MSS1/TRME-RELATED GTP-BINDING PROTEIN"/>
    <property type="match status" value="1"/>
</dbReference>
<dbReference type="Pfam" id="PF01926">
    <property type="entry name" value="MMR_HSR1"/>
    <property type="match status" value="1"/>
</dbReference>
<dbReference type="SUPFAM" id="SSF52540">
    <property type="entry name" value="P-loop containing nucleoside triphosphate hydrolases"/>
    <property type="match status" value="1"/>
</dbReference>
<dbReference type="PROSITE" id="PS51706">
    <property type="entry name" value="G_ENGB"/>
    <property type="match status" value="1"/>
</dbReference>
<evidence type="ECO:0000255" key="1">
    <source>
        <dbReference type="HAMAP-Rule" id="MF_00321"/>
    </source>
</evidence>
<evidence type="ECO:0000305" key="2"/>
<organism>
    <name type="scientific">Xanthomonas euvesicatoria pv. vesicatoria (strain 85-10)</name>
    <name type="common">Xanthomonas campestris pv. vesicatoria</name>
    <dbReference type="NCBI Taxonomy" id="316273"/>
    <lineage>
        <taxon>Bacteria</taxon>
        <taxon>Pseudomonadati</taxon>
        <taxon>Pseudomonadota</taxon>
        <taxon>Gammaproteobacteria</taxon>
        <taxon>Lysobacterales</taxon>
        <taxon>Lysobacteraceae</taxon>
        <taxon>Xanthomonas</taxon>
    </lineage>
</organism>
<name>ENGB_XANE5</name>